<proteinExistence type="inferred from homology"/>
<organism>
    <name type="scientific">Synechococcus sp. (strain JA-3-3Ab)</name>
    <name type="common">Cyanobacteria bacterium Yellowstone A-Prime</name>
    <dbReference type="NCBI Taxonomy" id="321327"/>
    <lineage>
        <taxon>Bacteria</taxon>
        <taxon>Bacillati</taxon>
        <taxon>Cyanobacteriota</taxon>
        <taxon>Cyanophyceae</taxon>
        <taxon>Synechococcales</taxon>
        <taxon>Synechococcaceae</taxon>
        <taxon>Synechococcus</taxon>
    </lineage>
</organism>
<accession>Q2JTL7</accession>
<keyword id="KW-0004">4Fe-4S</keyword>
<keyword id="KW-0013">ADP-ribosylation</keyword>
<keyword id="KW-0067">ATP-binding</keyword>
<keyword id="KW-0408">Iron</keyword>
<keyword id="KW-0411">Iron-sulfur</keyword>
<keyword id="KW-0479">Metal-binding</keyword>
<keyword id="KW-0535">Nitrogen fixation</keyword>
<keyword id="KW-0547">Nucleotide-binding</keyword>
<keyword id="KW-0560">Oxidoreductase</keyword>
<comment type="function">
    <text evidence="1">The key enzymatic reactions in nitrogen fixation are catalyzed by the nitrogenase complex, which has 2 components: the iron protein and the molybdenum-iron protein.</text>
</comment>
<comment type="catalytic activity">
    <reaction evidence="1">
        <text>N2 + 8 reduced [2Fe-2S]-[ferredoxin] + 16 ATP + 16 H2O = H2 + 8 oxidized [2Fe-2S]-[ferredoxin] + 2 NH4(+) + 16 ADP + 16 phosphate + 6 H(+)</text>
        <dbReference type="Rhea" id="RHEA:21448"/>
        <dbReference type="Rhea" id="RHEA-COMP:10000"/>
        <dbReference type="Rhea" id="RHEA-COMP:10001"/>
        <dbReference type="ChEBI" id="CHEBI:15377"/>
        <dbReference type="ChEBI" id="CHEBI:15378"/>
        <dbReference type="ChEBI" id="CHEBI:17997"/>
        <dbReference type="ChEBI" id="CHEBI:18276"/>
        <dbReference type="ChEBI" id="CHEBI:28938"/>
        <dbReference type="ChEBI" id="CHEBI:30616"/>
        <dbReference type="ChEBI" id="CHEBI:33737"/>
        <dbReference type="ChEBI" id="CHEBI:33738"/>
        <dbReference type="ChEBI" id="CHEBI:43474"/>
        <dbReference type="ChEBI" id="CHEBI:456216"/>
        <dbReference type="EC" id="1.18.6.1"/>
    </reaction>
</comment>
<comment type="cofactor">
    <cofactor evidence="1">
        <name>[4Fe-4S] cluster</name>
        <dbReference type="ChEBI" id="CHEBI:49883"/>
    </cofactor>
    <text evidence="1">Binds 1 [4Fe-4S] cluster per dimer.</text>
</comment>
<comment type="subunit">
    <text evidence="1">Homodimer.</text>
</comment>
<comment type="PTM">
    <text evidence="1">The reversible ADP-ribosylation of Arg-99 inactivates the nitrogenase reductase and regulates nitrogenase activity.</text>
</comment>
<comment type="similarity">
    <text evidence="1">Belongs to the NifH/BchL/ChlL family.</text>
</comment>
<sequence>MRQIAFYGKGGIGKSTTCQNTVAGMAELGQRIMIVGCDPKADSTRLMLHCKAQTTVLHLAAERGSVEDVELEEVVLTGYRGVRCVESGGPEPGVGCAGRGIITAINFLEENGAYEDLDFVCYDVLGDVVCGGFAMPIREGKAQEIYIVCSGEMMAMYAANNIARGVLKYAYSGGVRLGGLICNSRKVDREIELIEALAEKLNTKMLHFIPRDNVVQHAELRRMTVIEYSPDCNQADEYRALAKKIINNTDLRIPTPISMDELEQLLIEFGVLDDDQKIAHLIGKTEKELAPV</sequence>
<name>NIFH_SYNJA</name>
<evidence type="ECO:0000255" key="1">
    <source>
        <dbReference type="HAMAP-Rule" id="MF_00533"/>
    </source>
</evidence>
<reference key="1">
    <citation type="journal article" date="2007" name="ISME J.">
        <title>Population level functional diversity in a microbial community revealed by comparative genomic and metagenomic analyses.</title>
        <authorList>
            <person name="Bhaya D."/>
            <person name="Grossman A.R."/>
            <person name="Steunou A.-S."/>
            <person name="Khuri N."/>
            <person name="Cohan F.M."/>
            <person name="Hamamura N."/>
            <person name="Melendrez M.C."/>
            <person name="Bateson M.M."/>
            <person name="Ward D.M."/>
            <person name="Heidelberg J.F."/>
        </authorList>
    </citation>
    <scope>NUCLEOTIDE SEQUENCE [LARGE SCALE GENOMIC DNA]</scope>
    <source>
        <strain>JA-3-3Ab</strain>
    </source>
</reference>
<protein>
    <recommendedName>
        <fullName evidence="1">Nitrogenase iron protein</fullName>
        <ecNumber evidence="1">1.18.6.1</ecNumber>
    </recommendedName>
    <alternativeName>
        <fullName evidence="1">Nitrogenase Fe protein</fullName>
    </alternativeName>
    <alternativeName>
        <fullName evidence="1">Nitrogenase component II</fullName>
    </alternativeName>
    <alternativeName>
        <fullName evidence="1">Nitrogenase reductase</fullName>
    </alternativeName>
</protein>
<dbReference type="EC" id="1.18.6.1" evidence="1"/>
<dbReference type="EMBL" id="CP000239">
    <property type="protein sequence ID" value="ABC99975.1"/>
    <property type="molecule type" value="Genomic_DNA"/>
</dbReference>
<dbReference type="RefSeq" id="WP_011430651.1">
    <property type="nucleotide sequence ID" value="NC_007775.1"/>
</dbReference>
<dbReference type="SMR" id="Q2JTL7"/>
<dbReference type="STRING" id="321327.CYA_1824"/>
<dbReference type="KEGG" id="cya:CYA_1824"/>
<dbReference type="eggNOG" id="COG1348">
    <property type="taxonomic scope" value="Bacteria"/>
</dbReference>
<dbReference type="HOGENOM" id="CLU_059373_0_0_3"/>
<dbReference type="OrthoDB" id="9778641at2"/>
<dbReference type="Proteomes" id="UP000008818">
    <property type="component" value="Chromosome"/>
</dbReference>
<dbReference type="GO" id="GO:0051539">
    <property type="term" value="F:4 iron, 4 sulfur cluster binding"/>
    <property type="evidence" value="ECO:0007669"/>
    <property type="project" value="UniProtKB-KW"/>
</dbReference>
<dbReference type="GO" id="GO:0005524">
    <property type="term" value="F:ATP binding"/>
    <property type="evidence" value="ECO:0007669"/>
    <property type="project" value="UniProtKB-UniRule"/>
</dbReference>
<dbReference type="GO" id="GO:0046872">
    <property type="term" value="F:metal ion binding"/>
    <property type="evidence" value="ECO:0007669"/>
    <property type="project" value="UniProtKB-KW"/>
</dbReference>
<dbReference type="GO" id="GO:0016163">
    <property type="term" value="F:nitrogenase activity"/>
    <property type="evidence" value="ECO:0007669"/>
    <property type="project" value="UniProtKB-UniRule"/>
</dbReference>
<dbReference type="GO" id="GO:0009399">
    <property type="term" value="P:nitrogen fixation"/>
    <property type="evidence" value="ECO:0007669"/>
    <property type="project" value="UniProtKB-UniRule"/>
</dbReference>
<dbReference type="CDD" id="cd02040">
    <property type="entry name" value="NifH"/>
    <property type="match status" value="1"/>
</dbReference>
<dbReference type="FunFam" id="3.40.50.300:FF:001379">
    <property type="entry name" value="Nitrogenase iron protein 1"/>
    <property type="match status" value="1"/>
</dbReference>
<dbReference type="Gene3D" id="3.40.50.300">
    <property type="entry name" value="P-loop containing nucleotide triphosphate hydrolases"/>
    <property type="match status" value="1"/>
</dbReference>
<dbReference type="HAMAP" id="MF_00533">
    <property type="entry name" value="NifH"/>
    <property type="match status" value="1"/>
</dbReference>
<dbReference type="InterPro" id="IPR030655">
    <property type="entry name" value="NifH/chlL_CS"/>
</dbReference>
<dbReference type="InterPro" id="IPR000392">
    <property type="entry name" value="NifH/frxC"/>
</dbReference>
<dbReference type="InterPro" id="IPR005977">
    <property type="entry name" value="Nitrogenase_Fe_NifH"/>
</dbReference>
<dbReference type="InterPro" id="IPR027417">
    <property type="entry name" value="P-loop_NTPase"/>
</dbReference>
<dbReference type="NCBIfam" id="TIGR01287">
    <property type="entry name" value="nifH"/>
    <property type="match status" value="1"/>
</dbReference>
<dbReference type="PANTHER" id="PTHR42864">
    <property type="entry name" value="LIGHT-INDEPENDENT PROTOCHLOROPHYLLIDE REDUCTASE IRON-SULFUR ATP-BINDING PROTEIN"/>
    <property type="match status" value="1"/>
</dbReference>
<dbReference type="PANTHER" id="PTHR42864:SF2">
    <property type="entry name" value="LIGHT-INDEPENDENT PROTOCHLOROPHYLLIDE REDUCTASE IRON-SULFUR ATP-BINDING PROTEIN"/>
    <property type="match status" value="1"/>
</dbReference>
<dbReference type="Pfam" id="PF00142">
    <property type="entry name" value="Fer4_NifH"/>
    <property type="match status" value="1"/>
</dbReference>
<dbReference type="PIRSF" id="PIRSF000363">
    <property type="entry name" value="Nitrogenase_iron"/>
    <property type="match status" value="1"/>
</dbReference>
<dbReference type="PRINTS" id="PR00091">
    <property type="entry name" value="NITROGNASEII"/>
</dbReference>
<dbReference type="SUPFAM" id="SSF52540">
    <property type="entry name" value="P-loop containing nucleoside triphosphate hydrolases"/>
    <property type="match status" value="1"/>
</dbReference>
<dbReference type="PROSITE" id="PS00746">
    <property type="entry name" value="NIFH_FRXC_1"/>
    <property type="match status" value="1"/>
</dbReference>
<dbReference type="PROSITE" id="PS00692">
    <property type="entry name" value="NIFH_FRXC_2"/>
    <property type="match status" value="1"/>
</dbReference>
<dbReference type="PROSITE" id="PS51026">
    <property type="entry name" value="NIFH_FRXC_3"/>
    <property type="match status" value="1"/>
</dbReference>
<gene>
    <name evidence="1" type="primary">nifH</name>
    <name type="ordered locus">CYA_1824</name>
</gene>
<feature type="chain" id="PRO_1000211890" description="Nitrogenase iron protein">
    <location>
        <begin position="1"/>
        <end position="292"/>
    </location>
</feature>
<feature type="binding site" evidence="1">
    <location>
        <begin position="8"/>
        <end position="15"/>
    </location>
    <ligand>
        <name>ATP</name>
        <dbReference type="ChEBI" id="CHEBI:30616"/>
    </ligand>
</feature>
<feature type="binding site" evidence="1">
    <location>
        <position position="96"/>
    </location>
    <ligand>
        <name>[4Fe-4S] cluster</name>
        <dbReference type="ChEBI" id="CHEBI:49883"/>
        <note>ligand shared between dimeric partners</note>
    </ligand>
</feature>
<feature type="binding site" evidence="1">
    <location>
        <position position="130"/>
    </location>
    <ligand>
        <name>[4Fe-4S] cluster</name>
        <dbReference type="ChEBI" id="CHEBI:49883"/>
        <note>ligand shared between dimeric partners</note>
    </ligand>
</feature>
<feature type="modified residue" description="ADP-ribosylarginine; by dinitrogenase reductase ADP-ribosyltransferase" evidence="1">
    <location>
        <position position="99"/>
    </location>
</feature>